<feature type="peptide" id="PRO_0000044028" description="trp operon leader peptide">
    <location>
        <begin position="1"/>
        <end position="28"/>
    </location>
</feature>
<gene>
    <name type="primary">trpL</name>
</gene>
<reference key="1">
    <citation type="journal article" date="1978" name="Nature">
        <title>The regulatory region of the trp operon of Serratia marcescens.</title>
        <authorList>
            <person name="Miozzari G.F."/>
            <person name="Yanofsky C."/>
        </authorList>
    </citation>
    <scope>NUCLEOTIDE SEQUENCE [GENOMIC DNA]</scope>
</reference>
<proteinExistence type="predicted"/>
<accession>P03055</accession>
<sequence length="28" mass="3391">MRVNKESLQMNTYISLHGWWRTSLLRAV</sequence>
<protein>
    <recommendedName>
        <fullName>trp operon leader peptide</fullName>
    </recommendedName>
</protein>
<name>LPW_SERMA</name>
<organism>
    <name type="scientific">Serratia marcescens</name>
    <dbReference type="NCBI Taxonomy" id="615"/>
    <lineage>
        <taxon>Bacteria</taxon>
        <taxon>Pseudomonadati</taxon>
        <taxon>Pseudomonadota</taxon>
        <taxon>Gammaproteobacteria</taxon>
        <taxon>Enterobacterales</taxon>
        <taxon>Yersiniaceae</taxon>
        <taxon>Serratia</taxon>
    </lineage>
</organism>
<dbReference type="EMBL" id="AY027546">
    <property type="status" value="NOT_ANNOTATED_CDS"/>
    <property type="molecule type" value="Genomic_DNA"/>
</dbReference>
<dbReference type="PIR" id="A03591">
    <property type="entry name" value="LFSEW"/>
</dbReference>
<dbReference type="STRING" id="273526.SMDB11_1932A"/>
<dbReference type="GO" id="GO:0000162">
    <property type="term" value="P:L-tryptophan biosynthetic process"/>
    <property type="evidence" value="ECO:0007669"/>
    <property type="project" value="UniProtKB-KW"/>
</dbReference>
<dbReference type="InterPro" id="IPR013205">
    <property type="entry name" value="Leader_Trp_op"/>
</dbReference>
<dbReference type="Pfam" id="PF08255">
    <property type="entry name" value="Leader_Trp"/>
    <property type="match status" value="1"/>
</dbReference>
<comment type="function">
    <text>This protein is involved in control of the biosynthesis of tryptophan.</text>
</comment>
<keyword id="KW-0028">Amino-acid biosynthesis</keyword>
<keyword id="KW-0057">Aromatic amino acid biosynthesis</keyword>
<keyword id="KW-0428">Leader peptide</keyword>
<keyword id="KW-0822">Tryptophan biosynthesis</keyword>